<gene>
    <name type="ordered locus">AF_1266</name>
</gene>
<name>Y1266_ARCFU</name>
<evidence type="ECO:0000255" key="1"/>
<evidence type="ECO:0000305" key="2"/>
<organism>
    <name type="scientific">Archaeoglobus fulgidus (strain ATCC 49558 / DSM 4304 / JCM 9628 / NBRC 100126 / VC-16)</name>
    <dbReference type="NCBI Taxonomy" id="224325"/>
    <lineage>
        <taxon>Archaea</taxon>
        <taxon>Methanobacteriati</taxon>
        <taxon>Methanobacteriota</taxon>
        <taxon>Archaeoglobi</taxon>
        <taxon>Archaeoglobales</taxon>
        <taxon>Archaeoglobaceae</taxon>
        <taxon>Archaeoglobus</taxon>
    </lineage>
</organism>
<comment type="subcellular location">
    <subcellularLocation>
        <location evidence="2">Cell membrane</location>
        <topology evidence="2">Multi-pass membrane protein</topology>
    </subcellularLocation>
</comment>
<dbReference type="EMBL" id="AE000782">
    <property type="protein sequence ID" value="AAB89990.1"/>
    <property type="molecule type" value="Genomic_DNA"/>
</dbReference>
<dbReference type="PIR" id="A69408">
    <property type="entry name" value="A69408"/>
</dbReference>
<dbReference type="RefSeq" id="WP_010878761.1">
    <property type="nucleotide sequence ID" value="NC_000917.1"/>
</dbReference>
<dbReference type="PaxDb" id="224325-AF_1266"/>
<dbReference type="EnsemblBacteria" id="AAB89990">
    <property type="protein sequence ID" value="AAB89990"/>
    <property type="gene ID" value="AF_1266"/>
</dbReference>
<dbReference type="KEGG" id="afu:AF_1266"/>
<dbReference type="HOGENOM" id="CLU_1574887_0_0_2"/>
<dbReference type="Proteomes" id="UP000002199">
    <property type="component" value="Chromosome"/>
</dbReference>
<dbReference type="GO" id="GO:0005886">
    <property type="term" value="C:plasma membrane"/>
    <property type="evidence" value="ECO:0007669"/>
    <property type="project" value="UniProtKB-SubCell"/>
</dbReference>
<reference key="1">
    <citation type="journal article" date="1997" name="Nature">
        <title>The complete genome sequence of the hyperthermophilic, sulphate-reducing archaeon Archaeoglobus fulgidus.</title>
        <authorList>
            <person name="Klenk H.-P."/>
            <person name="Clayton R.A."/>
            <person name="Tomb J.-F."/>
            <person name="White O."/>
            <person name="Nelson K.E."/>
            <person name="Ketchum K.A."/>
            <person name="Dodson R.J."/>
            <person name="Gwinn M.L."/>
            <person name="Hickey E.K."/>
            <person name="Peterson J.D."/>
            <person name="Richardson D.L."/>
            <person name="Kerlavage A.R."/>
            <person name="Graham D.E."/>
            <person name="Kyrpides N.C."/>
            <person name="Fleischmann R.D."/>
            <person name="Quackenbush J."/>
            <person name="Lee N.H."/>
            <person name="Sutton G.G."/>
            <person name="Gill S.R."/>
            <person name="Kirkness E.F."/>
            <person name="Dougherty B.A."/>
            <person name="McKenney K."/>
            <person name="Adams M.D."/>
            <person name="Loftus B.J."/>
            <person name="Peterson S.N."/>
            <person name="Reich C.I."/>
            <person name="McNeil L.K."/>
            <person name="Badger J.H."/>
            <person name="Glodek A."/>
            <person name="Zhou L."/>
            <person name="Overbeek R."/>
            <person name="Gocayne J.D."/>
            <person name="Weidman J.F."/>
            <person name="McDonald L.A."/>
            <person name="Utterback T.R."/>
            <person name="Cotton M.D."/>
            <person name="Spriggs T."/>
            <person name="Artiach P."/>
            <person name="Kaine B.P."/>
            <person name="Sykes S.M."/>
            <person name="Sadow P.W."/>
            <person name="D'Andrea K.P."/>
            <person name="Bowman C."/>
            <person name="Fujii C."/>
            <person name="Garland S.A."/>
            <person name="Mason T.M."/>
            <person name="Olsen G.J."/>
            <person name="Fraser C.M."/>
            <person name="Smith H.O."/>
            <person name="Woese C.R."/>
            <person name="Venter J.C."/>
        </authorList>
    </citation>
    <scope>NUCLEOTIDE SEQUENCE [LARGE SCALE GENOMIC DNA]</scope>
    <source>
        <strain>ATCC 49558 / DSM 4304 / JCM 9628 / NBRC 100126 / VC-16</strain>
    </source>
</reference>
<sequence>MELTTPERVLFETEVYEIDDDLKVKRGNVKITESRIMFRSNGNAKLLYISGIQMVEIKKENRWGFFAGGLIFLVSSAIMYLLGLEFGVGSFTSALMLFVLPTAFLFVSLLLLYWWFVTRSYLLDMHTNFGRKLRIRSKSKEDLYEIANAVELVKMGAVRMLQRKERQFV</sequence>
<accession>O29002</accession>
<keyword id="KW-1003">Cell membrane</keyword>
<keyword id="KW-0472">Membrane</keyword>
<keyword id="KW-1185">Reference proteome</keyword>
<keyword id="KW-0812">Transmembrane</keyword>
<keyword id="KW-1133">Transmembrane helix</keyword>
<feature type="chain" id="PRO_0000127979" description="Uncharacterized protein AF_1266">
    <location>
        <begin position="1"/>
        <end position="169"/>
    </location>
</feature>
<feature type="transmembrane region" description="Helical" evidence="1">
    <location>
        <begin position="62"/>
        <end position="84"/>
    </location>
</feature>
<feature type="transmembrane region" description="Helical" evidence="1">
    <location>
        <begin position="94"/>
        <end position="116"/>
    </location>
</feature>
<proteinExistence type="predicted"/>
<protein>
    <recommendedName>
        <fullName>Uncharacterized protein AF_1266</fullName>
    </recommendedName>
</protein>